<feature type="chain" id="PRO_1000142652" description="Large ribosomal subunit protein uL18">
    <location>
        <begin position="1"/>
        <end position="123"/>
    </location>
</feature>
<keyword id="KW-1185">Reference proteome</keyword>
<keyword id="KW-0687">Ribonucleoprotein</keyword>
<keyword id="KW-0689">Ribosomal protein</keyword>
<keyword id="KW-0694">RNA-binding</keyword>
<keyword id="KW-0699">rRNA-binding</keyword>
<organism>
    <name type="scientific">Desulforudis audaxviator (strain MP104C)</name>
    <dbReference type="NCBI Taxonomy" id="477974"/>
    <lineage>
        <taxon>Bacteria</taxon>
        <taxon>Bacillati</taxon>
        <taxon>Bacillota</taxon>
        <taxon>Clostridia</taxon>
        <taxon>Thermoanaerobacterales</taxon>
        <taxon>Candidatus Desulforudaceae</taxon>
        <taxon>Candidatus Desulforudis</taxon>
    </lineage>
</organism>
<gene>
    <name evidence="1" type="primary">rplR</name>
    <name type="ordered locus">Daud_0241</name>
</gene>
<evidence type="ECO:0000255" key="1">
    <source>
        <dbReference type="HAMAP-Rule" id="MF_01337"/>
    </source>
</evidence>
<evidence type="ECO:0000305" key="2"/>
<name>RL18_DESAP</name>
<accession>B1I1L5</accession>
<protein>
    <recommendedName>
        <fullName evidence="1">Large ribosomal subunit protein uL18</fullName>
    </recommendedName>
    <alternativeName>
        <fullName evidence="2">50S ribosomal protein L18</fullName>
    </alternativeName>
</protein>
<comment type="function">
    <text evidence="1">This is one of the proteins that bind and probably mediate the attachment of the 5S RNA into the large ribosomal subunit, where it forms part of the central protuberance.</text>
</comment>
<comment type="subunit">
    <text evidence="1">Part of the 50S ribosomal subunit; part of the 5S rRNA/L5/L18/L25 subcomplex. Contacts the 5S and 23S rRNAs.</text>
</comment>
<comment type="similarity">
    <text evidence="1">Belongs to the universal ribosomal protein uL18 family.</text>
</comment>
<reference key="1">
    <citation type="submission" date="2007-10" db="EMBL/GenBank/DDBJ databases">
        <title>Complete sequence of chromosome of Desulforudis audaxviator MP104C.</title>
        <authorList>
            <person name="Copeland A."/>
            <person name="Lucas S."/>
            <person name="Lapidus A."/>
            <person name="Barry K."/>
            <person name="Glavina del Rio T."/>
            <person name="Dalin E."/>
            <person name="Tice H."/>
            <person name="Bruce D."/>
            <person name="Pitluck S."/>
            <person name="Lowry S.R."/>
            <person name="Larimer F."/>
            <person name="Land M.L."/>
            <person name="Hauser L."/>
            <person name="Kyrpides N."/>
            <person name="Ivanova N.N."/>
            <person name="Richardson P."/>
        </authorList>
    </citation>
    <scope>NUCLEOTIDE SEQUENCE [LARGE SCALE GENOMIC DNA]</scope>
    <source>
        <strain>MP104C</strain>
    </source>
</reference>
<dbReference type="EMBL" id="CP000860">
    <property type="protein sequence ID" value="ACA58802.1"/>
    <property type="molecule type" value="Genomic_DNA"/>
</dbReference>
<dbReference type="RefSeq" id="WP_012301394.1">
    <property type="nucleotide sequence ID" value="NC_010424.1"/>
</dbReference>
<dbReference type="SMR" id="B1I1L5"/>
<dbReference type="STRING" id="477974.Daud_0241"/>
<dbReference type="KEGG" id="dau:Daud_0241"/>
<dbReference type="eggNOG" id="COG0256">
    <property type="taxonomic scope" value="Bacteria"/>
</dbReference>
<dbReference type="HOGENOM" id="CLU_098841_0_1_9"/>
<dbReference type="OrthoDB" id="9810939at2"/>
<dbReference type="Proteomes" id="UP000008544">
    <property type="component" value="Chromosome"/>
</dbReference>
<dbReference type="GO" id="GO:0022625">
    <property type="term" value="C:cytosolic large ribosomal subunit"/>
    <property type="evidence" value="ECO:0007669"/>
    <property type="project" value="TreeGrafter"/>
</dbReference>
<dbReference type="GO" id="GO:0008097">
    <property type="term" value="F:5S rRNA binding"/>
    <property type="evidence" value="ECO:0007669"/>
    <property type="project" value="TreeGrafter"/>
</dbReference>
<dbReference type="GO" id="GO:0003735">
    <property type="term" value="F:structural constituent of ribosome"/>
    <property type="evidence" value="ECO:0007669"/>
    <property type="project" value="InterPro"/>
</dbReference>
<dbReference type="GO" id="GO:0006412">
    <property type="term" value="P:translation"/>
    <property type="evidence" value="ECO:0007669"/>
    <property type="project" value="UniProtKB-UniRule"/>
</dbReference>
<dbReference type="CDD" id="cd00432">
    <property type="entry name" value="Ribosomal_L18_L5e"/>
    <property type="match status" value="1"/>
</dbReference>
<dbReference type="FunFam" id="3.30.420.100:FF:000001">
    <property type="entry name" value="50S ribosomal protein L18"/>
    <property type="match status" value="1"/>
</dbReference>
<dbReference type="Gene3D" id="3.30.420.100">
    <property type="match status" value="1"/>
</dbReference>
<dbReference type="HAMAP" id="MF_01337_B">
    <property type="entry name" value="Ribosomal_uL18_B"/>
    <property type="match status" value="1"/>
</dbReference>
<dbReference type="InterPro" id="IPR004389">
    <property type="entry name" value="Ribosomal_uL18_bac-type"/>
</dbReference>
<dbReference type="InterPro" id="IPR005484">
    <property type="entry name" value="Ribosomal_uL18_bac/euk"/>
</dbReference>
<dbReference type="NCBIfam" id="TIGR00060">
    <property type="entry name" value="L18_bact"/>
    <property type="match status" value="1"/>
</dbReference>
<dbReference type="PANTHER" id="PTHR12899">
    <property type="entry name" value="39S RIBOSOMAL PROTEIN L18, MITOCHONDRIAL"/>
    <property type="match status" value="1"/>
</dbReference>
<dbReference type="PANTHER" id="PTHR12899:SF3">
    <property type="entry name" value="LARGE RIBOSOMAL SUBUNIT PROTEIN UL18M"/>
    <property type="match status" value="1"/>
</dbReference>
<dbReference type="Pfam" id="PF00861">
    <property type="entry name" value="Ribosomal_L18p"/>
    <property type="match status" value="1"/>
</dbReference>
<dbReference type="SUPFAM" id="SSF53137">
    <property type="entry name" value="Translational machinery components"/>
    <property type="match status" value="1"/>
</dbReference>
<sequence length="123" mass="13793">MLNKTSRKEQRERRRIRVRKKITGTRECPRLNVFRSARHIYAQLVDDERGVTLCAASTLLPELKERLGDGGGKIGVARAVGEMIAEKAKSLGIERVVFDRAGYLYHGRVKALAEGARAKGLEF</sequence>
<proteinExistence type="inferred from homology"/>